<dbReference type="EMBL" id="AP009049">
    <property type="protein sequence ID" value="BAH05834.1"/>
    <property type="molecule type" value="Genomic_DNA"/>
</dbReference>
<dbReference type="RefSeq" id="WP_012101248.1">
    <property type="nucleotide sequence ID" value="NC_011837.1"/>
</dbReference>
<dbReference type="SMR" id="B9E009"/>
<dbReference type="KEGG" id="ckr:CKR_0783"/>
<dbReference type="HOGENOM" id="CLU_048711_2_0_9"/>
<dbReference type="Proteomes" id="UP000007969">
    <property type="component" value="Chromosome"/>
</dbReference>
<dbReference type="GO" id="GO:0000902">
    <property type="term" value="P:cell morphogenesis"/>
    <property type="evidence" value="ECO:0007669"/>
    <property type="project" value="InterPro"/>
</dbReference>
<dbReference type="GO" id="GO:0000917">
    <property type="term" value="P:division septum assembly"/>
    <property type="evidence" value="ECO:0007669"/>
    <property type="project" value="UniProtKB-KW"/>
</dbReference>
<dbReference type="GO" id="GO:1901891">
    <property type="term" value="P:regulation of cell septum assembly"/>
    <property type="evidence" value="ECO:0007669"/>
    <property type="project" value="InterPro"/>
</dbReference>
<dbReference type="Gene3D" id="2.160.20.70">
    <property type="match status" value="1"/>
</dbReference>
<dbReference type="Gene3D" id="3.30.160.540">
    <property type="match status" value="1"/>
</dbReference>
<dbReference type="HAMAP" id="MF_00267">
    <property type="entry name" value="MinC"/>
    <property type="match status" value="1"/>
</dbReference>
<dbReference type="InterPro" id="IPR016098">
    <property type="entry name" value="CAP/MinC_C"/>
</dbReference>
<dbReference type="InterPro" id="IPR013033">
    <property type="entry name" value="MinC"/>
</dbReference>
<dbReference type="InterPro" id="IPR036145">
    <property type="entry name" value="MinC_C_sf"/>
</dbReference>
<dbReference type="InterPro" id="IPR055219">
    <property type="entry name" value="MinC_N_1"/>
</dbReference>
<dbReference type="InterPro" id="IPR005526">
    <property type="entry name" value="Septum_form_inhib_MinC_C"/>
</dbReference>
<dbReference type="NCBIfam" id="TIGR01222">
    <property type="entry name" value="minC"/>
    <property type="match status" value="1"/>
</dbReference>
<dbReference type="NCBIfam" id="NF001775">
    <property type="entry name" value="PRK00513.1-6"/>
    <property type="match status" value="1"/>
</dbReference>
<dbReference type="PANTHER" id="PTHR34108">
    <property type="entry name" value="SEPTUM SITE-DETERMINING PROTEIN MINC"/>
    <property type="match status" value="1"/>
</dbReference>
<dbReference type="PANTHER" id="PTHR34108:SF1">
    <property type="entry name" value="SEPTUM SITE-DETERMINING PROTEIN MINC"/>
    <property type="match status" value="1"/>
</dbReference>
<dbReference type="Pfam" id="PF03775">
    <property type="entry name" value="MinC_C"/>
    <property type="match status" value="1"/>
</dbReference>
<dbReference type="Pfam" id="PF22642">
    <property type="entry name" value="MinC_N_1"/>
    <property type="match status" value="1"/>
</dbReference>
<dbReference type="SUPFAM" id="SSF63848">
    <property type="entry name" value="Cell-division inhibitor MinC, C-terminal domain"/>
    <property type="match status" value="1"/>
</dbReference>
<gene>
    <name evidence="1" type="primary">minC</name>
    <name type="ordered locus">CKR_0783</name>
</gene>
<keyword id="KW-0131">Cell cycle</keyword>
<keyword id="KW-0132">Cell division</keyword>
<keyword id="KW-0717">Septation</keyword>
<name>MINC_CLOK1</name>
<feature type="chain" id="PRO_1000191240" description="Probable septum site-determining protein MinC">
    <location>
        <begin position="1"/>
        <end position="209"/>
    </location>
</feature>
<protein>
    <recommendedName>
        <fullName evidence="1">Probable septum site-determining protein MinC</fullName>
    </recommendedName>
</protein>
<proteinExistence type="inferred from homology"/>
<comment type="function">
    <text evidence="1">Cell division inhibitor that blocks the formation of polar Z ring septums. Rapidly oscillates between the poles of the cell to destabilize FtsZ filaments that have formed before they mature into polar Z rings. Prevents FtsZ polymerization.</text>
</comment>
<comment type="subunit">
    <text evidence="1">Interacts with MinD and FtsZ.</text>
</comment>
<comment type="similarity">
    <text evidence="1">Belongs to the MinC family.</text>
</comment>
<reference key="1">
    <citation type="submission" date="2005-09" db="EMBL/GenBank/DDBJ databases">
        <title>Complete genome sequence of Clostridium kluyveri and comparative genomics of Clostridia species.</title>
        <authorList>
            <person name="Inui M."/>
            <person name="Nonaka H."/>
            <person name="Shinoda Y."/>
            <person name="Ikenaga Y."/>
            <person name="Abe M."/>
            <person name="Naito K."/>
            <person name="Vertes A.A."/>
            <person name="Yukawa H."/>
        </authorList>
    </citation>
    <scope>NUCLEOTIDE SEQUENCE [LARGE SCALE GENOMIC DNA]</scope>
    <source>
        <strain>NBRC 12016</strain>
    </source>
</reference>
<sequence length="209" mass="23340">MIDNNILVKGNKEGINIVININKFKDFEEMLEALVKRLSVGKMFYKGCNLKIITDLKNINEKQSVRLKQVLFEKFLIKDCIFEDSNEKPSKIFSGIYEGRTKFLRKTIRGGQVVNYPGNIVIIGDVNAGSEIYVGGNIVVFGALRGYAHAGFGGNSKAIVAAISLEPEMLQIADLVTRSPDNMKPQYPEVAKIRGNIIIVEPYLPNKFI</sequence>
<evidence type="ECO:0000255" key="1">
    <source>
        <dbReference type="HAMAP-Rule" id="MF_00267"/>
    </source>
</evidence>
<organism>
    <name type="scientific">Clostridium kluyveri (strain NBRC 12016)</name>
    <dbReference type="NCBI Taxonomy" id="583346"/>
    <lineage>
        <taxon>Bacteria</taxon>
        <taxon>Bacillati</taxon>
        <taxon>Bacillota</taxon>
        <taxon>Clostridia</taxon>
        <taxon>Eubacteriales</taxon>
        <taxon>Clostridiaceae</taxon>
        <taxon>Clostridium</taxon>
    </lineage>
</organism>
<accession>B9E009</accession>